<reference key="1">
    <citation type="journal article" date="2010" name="Appl. Environ. Microbiol.">
        <title>Conserved symbiotic plasmid DNA sequences in the multireplicon pangenomic structure of Rhizobium etli.</title>
        <authorList>
            <person name="Gonzalez V."/>
            <person name="Acosta J.L."/>
            <person name="Santamaria R.I."/>
            <person name="Bustos P."/>
            <person name="Fernandez J.L."/>
            <person name="Hernandez Gonzalez I.L."/>
            <person name="Diaz R."/>
            <person name="Flores M."/>
            <person name="Palacios R."/>
            <person name="Mora J."/>
            <person name="Davila G."/>
        </authorList>
    </citation>
    <scope>NUCLEOTIDE SEQUENCE [LARGE SCALE GENOMIC DNA]</scope>
    <source>
        <strain>CIAT 652</strain>
    </source>
</reference>
<feature type="chain" id="PRO_1000094982" description="Deoxyuridine 5'-triphosphate nucleotidohydrolase">
    <location>
        <begin position="1"/>
        <end position="156"/>
    </location>
</feature>
<feature type="binding site" evidence="1">
    <location>
        <begin position="76"/>
        <end position="78"/>
    </location>
    <ligand>
        <name>substrate</name>
    </ligand>
</feature>
<feature type="binding site" evidence="1">
    <location>
        <position position="89"/>
    </location>
    <ligand>
        <name>substrate</name>
    </ligand>
</feature>
<feature type="binding site" evidence="1">
    <location>
        <begin position="93"/>
        <end position="95"/>
    </location>
    <ligand>
        <name>substrate</name>
    </ligand>
</feature>
<feature type="binding site" evidence="1">
    <location>
        <position position="103"/>
    </location>
    <ligand>
        <name>substrate</name>
    </ligand>
</feature>
<name>DUT_RHIE6</name>
<protein>
    <recommendedName>
        <fullName evidence="1">Deoxyuridine 5'-triphosphate nucleotidohydrolase</fullName>
        <shortName evidence="1">dUTPase</shortName>
        <ecNumber evidence="1">3.6.1.23</ecNumber>
    </recommendedName>
    <alternativeName>
        <fullName evidence="1">dUTP pyrophosphatase</fullName>
    </alternativeName>
</protein>
<evidence type="ECO:0000255" key="1">
    <source>
        <dbReference type="HAMAP-Rule" id="MF_00116"/>
    </source>
</evidence>
<gene>
    <name evidence="1" type="primary">dut</name>
    <name type="ordered locus">RHECIAT_CH0000369</name>
</gene>
<sequence>MTIHHETRPTLNLIRLANGEGLELPAYESQGAAGMDLRAAVDGDAPLTLPPGKRALVPTGFIFEIPEGFEGQVRPRSGLAFKHGITCLNSPGTVDSDYRGEVKVLLANLGEEAFVIERGMRIAQMVIAPVTQARVAEITAASETARGAGGFGSTGV</sequence>
<accession>B3PZ69</accession>
<comment type="function">
    <text evidence="1">This enzyme is involved in nucleotide metabolism: it produces dUMP, the immediate precursor of thymidine nucleotides and it decreases the intracellular concentration of dUTP so that uracil cannot be incorporated into DNA.</text>
</comment>
<comment type="catalytic activity">
    <reaction evidence="1">
        <text>dUTP + H2O = dUMP + diphosphate + H(+)</text>
        <dbReference type="Rhea" id="RHEA:10248"/>
        <dbReference type="ChEBI" id="CHEBI:15377"/>
        <dbReference type="ChEBI" id="CHEBI:15378"/>
        <dbReference type="ChEBI" id="CHEBI:33019"/>
        <dbReference type="ChEBI" id="CHEBI:61555"/>
        <dbReference type="ChEBI" id="CHEBI:246422"/>
        <dbReference type="EC" id="3.6.1.23"/>
    </reaction>
</comment>
<comment type="cofactor">
    <cofactor evidence="1">
        <name>Mg(2+)</name>
        <dbReference type="ChEBI" id="CHEBI:18420"/>
    </cofactor>
</comment>
<comment type="pathway">
    <text evidence="1">Pyrimidine metabolism; dUMP biosynthesis; dUMP from dCTP (dUTP route): step 2/2.</text>
</comment>
<comment type="similarity">
    <text evidence="1">Belongs to the dUTPase family.</text>
</comment>
<keyword id="KW-0378">Hydrolase</keyword>
<keyword id="KW-0460">Magnesium</keyword>
<keyword id="KW-0479">Metal-binding</keyword>
<keyword id="KW-0546">Nucleotide metabolism</keyword>
<organism>
    <name type="scientific">Rhizobium etli (strain CIAT 652)</name>
    <dbReference type="NCBI Taxonomy" id="491916"/>
    <lineage>
        <taxon>Bacteria</taxon>
        <taxon>Pseudomonadati</taxon>
        <taxon>Pseudomonadota</taxon>
        <taxon>Alphaproteobacteria</taxon>
        <taxon>Hyphomicrobiales</taxon>
        <taxon>Rhizobiaceae</taxon>
        <taxon>Rhizobium/Agrobacterium group</taxon>
        <taxon>Rhizobium</taxon>
    </lineage>
</organism>
<proteinExistence type="inferred from homology"/>
<dbReference type="EC" id="3.6.1.23" evidence="1"/>
<dbReference type="EMBL" id="CP001074">
    <property type="protein sequence ID" value="ACE89363.1"/>
    <property type="molecule type" value="Genomic_DNA"/>
</dbReference>
<dbReference type="SMR" id="B3PZ69"/>
<dbReference type="KEGG" id="rec:RHECIAT_CH0000369"/>
<dbReference type="eggNOG" id="COG0756">
    <property type="taxonomic scope" value="Bacteria"/>
</dbReference>
<dbReference type="HOGENOM" id="CLU_068508_1_0_5"/>
<dbReference type="UniPathway" id="UPA00610">
    <property type="reaction ID" value="UER00666"/>
</dbReference>
<dbReference type="Proteomes" id="UP000008817">
    <property type="component" value="Chromosome"/>
</dbReference>
<dbReference type="GO" id="GO:0004170">
    <property type="term" value="F:dUTP diphosphatase activity"/>
    <property type="evidence" value="ECO:0007669"/>
    <property type="project" value="UniProtKB-UniRule"/>
</dbReference>
<dbReference type="GO" id="GO:0000287">
    <property type="term" value="F:magnesium ion binding"/>
    <property type="evidence" value="ECO:0007669"/>
    <property type="project" value="UniProtKB-UniRule"/>
</dbReference>
<dbReference type="GO" id="GO:0006226">
    <property type="term" value="P:dUMP biosynthetic process"/>
    <property type="evidence" value="ECO:0007669"/>
    <property type="project" value="UniProtKB-UniRule"/>
</dbReference>
<dbReference type="GO" id="GO:0046081">
    <property type="term" value="P:dUTP catabolic process"/>
    <property type="evidence" value="ECO:0007669"/>
    <property type="project" value="InterPro"/>
</dbReference>
<dbReference type="CDD" id="cd07557">
    <property type="entry name" value="trimeric_dUTPase"/>
    <property type="match status" value="1"/>
</dbReference>
<dbReference type="Gene3D" id="2.70.40.10">
    <property type="match status" value="1"/>
</dbReference>
<dbReference type="HAMAP" id="MF_00116">
    <property type="entry name" value="dUTPase_bact"/>
    <property type="match status" value="1"/>
</dbReference>
<dbReference type="InterPro" id="IPR008181">
    <property type="entry name" value="dUTPase"/>
</dbReference>
<dbReference type="InterPro" id="IPR029054">
    <property type="entry name" value="dUTPase-like"/>
</dbReference>
<dbReference type="InterPro" id="IPR036157">
    <property type="entry name" value="dUTPase-like_sf"/>
</dbReference>
<dbReference type="InterPro" id="IPR033704">
    <property type="entry name" value="dUTPase_trimeric"/>
</dbReference>
<dbReference type="NCBIfam" id="TIGR00576">
    <property type="entry name" value="dut"/>
    <property type="match status" value="1"/>
</dbReference>
<dbReference type="NCBIfam" id="NF001862">
    <property type="entry name" value="PRK00601.1"/>
    <property type="match status" value="1"/>
</dbReference>
<dbReference type="PANTHER" id="PTHR11241">
    <property type="entry name" value="DEOXYURIDINE 5'-TRIPHOSPHATE NUCLEOTIDOHYDROLASE"/>
    <property type="match status" value="1"/>
</dbReference>
<dbReference type="PANTHER" id="PTHR11241:SF0">
    <property type="entry name" value="DEOXYURIDINE 5'-TRIPHOSPHATE NUCLEOTIDOHYDROLASE"/>
    <property type="match status" value="1"/>
</dbReference>
<dbReference type="Pfam" id="PF00692">
    <property type="entry name" value="dUTPase"/>
    <property type="match status" value="1"/>
</dbReference>
<dbReference type="SUPFAM" id="SSF51283">
    <property type="entry name" value="dUTPase-like"/>
    <property type="match status" value="1"/>
</dbReference>